<proteinExistence type="inferred from homology"/>
<accession>Q39X04</accession>
<protein>
    <recommendedName>
        <fullName evidence="1">3-dehydroquinate synthase</fullName>
        <shortName evidence="1">DHQS</shortName>
        <ecNumber evidence="1">4.2.3.4</ecNumber>
    </recommendedName>
</protein>
<feature type="chain" id="PRO_0000231089" description="3-dehydroquinate synthase">
    <location>
        <begin position="1"/>
        <end position="360"/>
    </location>
</feature>
<feature type="binding site" evidence="1">
    <location>
        <begin position="72"/>
        <end position="77"/>
    </location>
    <ligand>
        <name>NAD(+)</name>
        <dbReference type="ChEBI" id="CHEBI:57540"/>
    </ligand>
</feature>
<feature type="binding site" evidence="1">
    <location>
        <begin position="106"/>
        <end position="110"/>
    </location>
    <ligand>
        <name>NAD(+)</name>
        <dbReference type="ChEBI" id="CHEBI:57540"/>
    </ligand>
</feature>
<feature type="binding site" evidence="1">
    <location>
        <begin position="130"/>
        <end position="131"/>
    </location>
    <ligand>
        <name>NAD(+)</name>
        <dbReference type="ChEBI" id="CHEBI:57540"/>
    </ligand>
</feature>
<feature type="binding site" evidence="1">
    <location>
        <position position="143"/>
    </location>
    <ligand>
        <name>NAD(+)</name>
        <dbReference type="ChEBI" id="CHEBI:57540"/>
    </ligand>
</feature>
<feature type="binding site" evidence="1">
    <location>
        <position position="152"/>
    </location>
    <ligand>
        <name>NAD(+)</name>
        <dbReference type="ChEBI" id="CHEBI:57540"/>
    </ligand>
</feature>
<feature type="binding site" evidence="1">
    <location>
        <begin position="170"/>
        <end position="173"/>
    </location>
    <ligand>
        <name>NAD(+)</name>
        <dbReference type="ChEBI" id="CHEBI:57540"/>
    </ligand>
</feature>
<feature type="binding site" evidence="1">
    <location>
        <position position="185"/>
    </location>
    <ligand>
        <name>Zn(2+)</name>
        <dbReference type="ChEBI" id="CHEBI:29105"/>
    </ligand>
</feature>
<feature type="binding site" evidence="1">
    <location>
        <position position="248"/>
    </location>
    <ligand>
        <name>Zn(2+)</name>
        <dbReference type="ChEBI" id="CHEBI:29105"/>
    </ligand>
</feature>
<feature type="binding site" evidence="1">
    <location>
        <position position="265"/>
    </location>
    <ligand>
        <name>Zn(2+)</name>
        <dbReference type="ChEBI" id="CHEBI:29105"/>
    </ligand>
</feature>
<comment type="function">
    <text evidence="1">Catalyzes the conversion of 3-deoxy-D-arabino-heptulosonate 7-phosphate (DAHP) to dehydroquinate (DHQ).</text>
</comment>
<comment type="catalytic activity">
    <reaction evidence="1">
        <text>7-phospho-2-dehydro-3-deoxy-D-arabino-heptonate = 3-dehydroquinate + phosphate</text>
        <dbReference type="Rhea" id="RHEA:21968"/>
        <dbReference type="ChEBI" id="CHEBI:32364"/>
        <dbReference type="ChEBI" id="CHEBI:43474"/>
        <dbReference type="ChEBI" id="CHEBI:58394"/>
        <dbReference type="EC" id="4.2.3.4"/>
    </reaction>
</comment>
<comment type="cofactor">
    <cofactor evidence="1">
        <name>Co(2+)</name>
        <dbReference type="ChEBI" id="CHEBI:48828"/>
    </cofactor>
    <cofactor evidence="1">
        <name>Zn(2+)</name>
        <dbReference type="ChEBI" id="CHEBI:29105"/>
    </cofactor>
    <text evidence="1">Binds 1 divalent metal cation per subunit. Can use either Co(2+) or Zn(2+).</text>
</comment>
<comment type="cofactor">
    <cofactor evidence="1">
        <name>NAD(+)</name>
        <dbReference type="ChEBI" id="CHEBI:57540"/>
    </cofactor>
</comment>
<comment type="pathway">
    <text evidence="1">Metabolic intermediate biosynthesis; chorismate biosynthesis; chorismate from D-erythrose 4-phosphate and phosphoenolpyruvate: step 2/7.</text>
</comment>
<comment type="subcellular location">
    <subcellularLocation>
        <location evidence="1">Cytoplasm</location>
    </subcellularLocation>
</comment>
<comment type="similarity">
    <text evidence="1">Belongs to the sugar phosphate cyclases superfamily. Dehydroquinate synthase family.</text>
</comment>
<organism>
    <name type="scientific">Geobacter metallireducens (strain ATCC 53774 / DSM 7210 / GS-15)</name>
    <dbReference type="NCBI Taxonomy" id="269799"/>
    <lineage>
        <taxon>Bacteria</taxon>
        <taxon>Pseudomonadati</taxon>
        <taxon>Thermodesulfobacteriota</taxon>
        <taxon>Desulfuromonadia</taxon>
        <taxon>Geobacterales</taxon>
        <taxon>Geobacteraceae</taxon>
        <taxon>Geobacter</taxon>
    </lineage>
</organism>
<evidence type="ECO:0000255" key="1">
    <source>
        <dbReference type="HAMAP-Rule" id="MF_00110"/>
    </source>
</evidence>
<reference key="1">
    <citation type="journal article" date="2009" name="BMC Microbiol.">
        <title>The genome sequence of Geobacter metallireducens: features of metabolism, physiology and regulation common and dissimilar to Geobacter sulfurreducens.</title>
        <authorList>
            <person name="Aklujkar M."/>
            <person name="Krushkal J."/>
            <person name="DiBartolo G."/>
            <person name="Lapidus A."/>
            <person name="Land M.L."/>
            <person name="Lovley D.R."/>
        </authorList>
    </citation>
    <scope>NUCLEOTIDE SEQUENCE [LARGE SCALE GENOMIC DNA]</scope>
    <source>
        <strain>ATCC 53774 / DSM 7210 / GS-15</strain>
    </source>
</reference>
<name>AROB_GEOMG</name>
<keyword id="KW-0028">Amino-acid biosynthesis</keyword>
<keyword id="KW-0057">Aromatic amino acid biosynthesis</keyword>
<keyword id="KW-0170">Cobalt</keyword>
<keyword id="KW-0963">Cytoplasm</keyword>
<keyword id="KW-0456">Lyase</keyword>
<keyword id="KW-0479">Metal-binding</keyword>
<keyword id="KW-0520">NAD</keyword>
<keyword id="KW-0547">Nucleotide-binding</keyword>
<keyword id="KW-1185">Reference proteome</keyword>
<keyword id="KW-0862">Zinc</keyword>
<sequence>METLTVGLGDRSYTIRGGSGILPGIGAFCRELGLGRIVAVVTNTTVGPLYYGPVADSLAAAGFSPLRVELPDGEEFKTSATMNIIYDALIDGGLTRDSFIVALGGGVVGDMAGFAAATYLRGIPFVQVPTTLLAQVDSSVGGKTGINHPRGKNLIGAFYQPRAVVIDVETLTTLPEREYLAGMAEVVKYGVVLDPQLFAEVERNITPILARDRDVLTRIIMACCAIKASVVEKDERESGLRAVLNYGHTLGHAVETLAGYGTFLHGEAVAIGMVQAAKLAEHRGEATADDTGRLRALLESLKLPVELPVFAAEAYREVLLRDKKARDTGLSFVLNNGIGGFSIVRLRDLSEVIDVCGIGG</sequence>
<dbReference type="EC" id="4.2.3.4" evidence="1"/>
<dbReference type="EMBL" id="CP000148">
    <property type="protein sequence ID" value="ABB31220.1"/>
    <property type="molecule type" value="Genomic_DNA"/>
</dbReference>
<dbReference type="RefSeq" id="WP_004514373.1">
    <property type="nucleotide sequence ID" value="NC_007517.1"/>
</dbReference>
<dbReference type="SMR" id="Q39X04"/>
<dbReference type="STRING" id="269799.Gmet_0978"/>
<dbReference type="KEGG" id="gme:Gmet_0978"/>
<dbReference type="eggNOG" id="COG0337">
    <property type="taxonomic scope" value="Bacteria"/>
</dbReference>
<dbReference type="HOGENOM" id="CLU_001201_0_2_7"/>
<dbReference type="UniPathway" id="UPA00053">
    <property type="reaction ID" value="UER00085"/>
</dbReference>
<dbReference type="Proteomes" id="UP000007073">
    <property type="component" value="Chromosome"/>
</dbReference>
<dbReference type="GO" id="GO:0005737">
    <property type="term" value="C:cytoplasm"/>
    <property type="evidence" value="ECO:0007669"/>
    <property type="project" value="UniProtKB-SubCell"/>
</dbReference>
<dbReference type="GO" id="GO:0003856">
    <property type="term" value="F:3-dehydroquinate synthase activity"/>
    <property type="evidence" value="ECO:0007669"/>
    <property type="project" value="UniProtKB-UniRule"/>
</dbReference>
<dbReference type="GO" id="GO:0046872">
    <property type="term" value="F:metal ion binding"/>
    <property type="evidence" value="ECO:0007669"/>
    <property type="project" value="UniProtKB-KW"/>
</dbReference>
<dbReference type="GO" id="GO:0000166">
    <property type="term" value="F:nucleotide binding"/>
    <property type="evidence" value="ECO:0007669"/>
    <property type="project" value="UniProtKB-KW"/>
</dbReference>
<dbReference type="GO" id="GO:0008652">
    <property type="term" value="P:amino acid biosynthetic process"/>
    <property type="evidence" value="ECO:0007669"/>
    <property type="project" value="UniProtKB-KW"/>
</dbReference>
<dbReference type="GO" id="GO:0009073">
    <property type="term" value="P:aromatic amino acid family biosynthetic process"/>
    <property type="evidence" value="ECO:0007669"/>
    <property type="project" value="UniProtKB-KW"/>
</dbReference>
<dbReference type="GO" id="GO:0009423">
    <property type="term" value="P:chorismate biosynthetic process"/>
    <property type="evidence" value="ECO:0007669"/>
    <property type="project" value="UniProtKB-UniRule"/>
</dbReference>
<dbReference type="CDD" id="cd08195">
    <property type="entry name" value="DHQS"/>
    <property type="match status" value="1"/>
</dbReference>
<dbReference type="FunFam" id="3.40.50.1970:FF:000001">
    <property type="entry name" value="3-dehydroquinate synthase"/>
    <property type="match status" value="1"/>
</dbReference>
<dbReference type="Gene3D" id="3.40.50.1970">
    <property type="match status" value="1"/>
</dbReference>
<dbReference type="Gene3D" id="1.20.1090.10">
    <property type="entry name" value="Dehydroquinate synthase-like - alpha domain"/>
    <property type="match status" value="1"/>
</dbReference>
<dbReference type="HAMAP" id="MF_00110">
    <property type="entry name" value="DHQ_synthase"/>
    <property type="match status" value="1"/>
</dbReference>
<dbReference type="InterPro" id="IPR050071">
    <property type="entry name" value="Dehydroquinate_synthase"/>
</dbReference>
<dbReference type="InterPro" id="IPR016037">
    <property type="entry name" value="DHQ_synth_AroB"/>
</dbReference>
<dbReference type="InterPro" id="IPR030963">
    <property type="entry name" value="DHQ_synth_fam"/>
</dbReference>
<dbReference type="InterPro" id="IPR030960">
    <property type="entry name" value="DHQS/DOIS_N"/>
</dbReference>
<dbReference type="InterPro" id="IPR056179">
    <property type="entry name" value="DHQS_C"/>
</dbReference>
<dbReference type="NCBIfam" id="TIGR01357">
    <property type="entry name" value="aroB"/>
    <property type="match status" value="1"/>
</dbReference>
<dbReference type="PANTHER" id="PTHR43622">
    <property type="entry name" value="3-DEHYDROQUINATE SYNTHASE"/>
    <property type="match status" value="1"/>
</dbReference>
<dbReference type="PANTHER" id="PTHR43622:SF7">
    <property type="entry name" value="3-DEHYDROQUINATE SYNTHASE, CHLOROPLASTIC"/>
    <property type="match status" value="1"/>
</dbReference>
<dbReference type="Pfam" id="PF01761">
    <property type="entry name" value="DHQ_synthase"/>
    <property type="match status" value="1"/>
</dbReference>
<dbReference type="Pfam" id="PF24621">
    <property type="entry name" value="DHQS_C"/>
    <property type="match status" value="1"/>
</dbReference>
<dbReference type="PIRSF" id="PIRSF001455">
    <property type="entry name" value="DHQ_synth"/>
    <property type="match status" value="1"/>
</dbReference>
<dbReference type="SUPFAM" id="SSF56796">
    <property type="entry name" value="Dehydroquinate synthase-like"/>
    <property type="match status" value="1"/>
</dbReference>
<gene>
    <name evidence="1" type="primary">aroB</name>
    <name type="ordered locus">Gmet_0978</name>
</gene>